<dbReference type="EC" id="3.1.13.-" evidence="1"/>
<dbReference type="EMBL" id="CP000436">
    <property type="protein sequence ID" value="ABI24778.1"/>
    <property type="molecule type" value="Genomic_DNA"/>
</dbReference>
<dbReference type="SMR" id="Q0I251"/>
<dbReference type="KEGG" id="hso:HS_0501"/>
<dbReference type="eggNOG" id="COG0847">
    <property type="taxonomic scope" value="Bacteria"/>
</dbReference>
<dbReference type="HOGENOM" id="CLU_082724_0_0_6"/>
<dbReference type="GO" id="GO:0005829">
    <property type="term" value="C:cytosol"/>
    <property type="evidence" value="ECO:0007669"/>
    <property type="project" value="TreeGrafter"/>
</dbReference>
<dbReference type="GO" id="GO:0008408">
    <property type="term" value="F:3'-5' exonuclease activity"/>
    <property type="evidence" value="ECO:0007669"/>
    <property type="project" value="TreeGrafter"/>
</dbReference>
<dbReference type="GO" id="GO:0000287">
    <property type="term" value="F:magnesium ion binding"/>
    <property type="evidence" value="ECO:0007669"/>
    <property type="project" value="UniProtKB-UniRule"/>
</dbReference>
<dbReference type="GO" id="GO:0003676">
    <property type="term" value="F:nucleic acid binding"/>
    <property type="evidence" value="ECO:0007669"/>
    <property type="project" value="InterPro"/>
</dbReference>
<dbReference type="GO" id="GO:0016896">
    <property type="term" value="F:RNA exonuclease activity, producing 5'-phosphomonoesters"/>
    <property type="evidence" value="ECO:0007669"/>
    <property type="project" value="UniProtKB-UniRule"/>
</dbReference>
<dbReference type="GO" id="GO:0045004">
    <property type="term" value="P:DNA replication proofreading"/>
    <property type="evidence" value="ECO:0007669"/>
    <property type="project" value="TreeGrafter"/>
</dbReference>
<dbReference type="GO" id="GO:0008033">
    <property type="term" value="P:tRNA processing"/>
    <property type="evidence" value="ECO:0007669"/>
    <property type="project" value="UniProtKB-KW"/>
</dbReference>
<dbReference type="CDD" id="cd06134">
    <property type="entry name" value="RNaseT"/>
    <property type="match status" value="1"/>
</dbReference>
<dbReference type="FunFam" id="3.30.420.10:FF:000009">
    <property type="entry name" value="Ribonuclease T"/>
    <property type="match status" value="1"/>
</dbReference>
<dbReference type="Gene3D" id="3.30.420.10">
    <property type="entry name" value="Ribonuclease H-like superfamily/Ribonuclease H"/>
    <property type="match status" value="1"/>
</dbReference>
<dbReference type="HAMAP" id="MF_00157">
    <property type="entry name" value="RNase_T"/>
    <property type="match status" value="1"/>
</dbReference>
<dbReference type="InterPro" id="IPR013520">
    <property type="entry name" value="Exonuclease_RNaseT/DNA_pol3"/>
</dbReference>
<dbReference type="InterPro" id="IPR005987">
    <property type="entry name" value="RNase_T"/>
</dbReference>
<dbReference type="InterPro" id="IPR012337">
    <property type="entry name" value="RNaseH-like_sf"/>
</dbReference>
<dbReference type="InterPro" id="IPR036397">
    <property type="entry name" value="RNaseH_sf"/>
</dbReference>
<dbReference type="NCBIfam" id="TIGR01298">
    <property type="entry name" value="RNaseT"/>
    <property type="match status" value="1"/>
</dbReference>
<dbReference type="PANTHER" id="PTHR30231">
    <property type="entry name" value="DNA POLYMERASE III SUBUNIT EPSILON"/>
    <property type="match status" value="1"/>
</dbReference>
<dbReference type="PANTHER" id="PTHR30231:SF2">
    <property type="entry name" value="RIBONUCLEASE T"/>
    <property type="match status" value="1"/>
</dbReference>
<dbReference type="Pfam" id="PF00929">
    <property type="entry name" value="RNase_T"/>
    <property type="match status" value="1"/>
</dbReference>
<dbReference type="SMART" id="SM00479">
    <property type="entry name" value="EXOIII"/>
    <property type="match status" value="1"/>
</dbReference>
<dbReference type="SUPFAM" id="SSF53098">
    <property type="entry name" value="Ribonuclease H-like"/>
    <property type="match status" value="1"/>
</dbReference>
<gene>
    <name evidence="1" type="primary">rnt</name>
    <name type="ordered locus">HS_0501</name>
</gene>
<reference key="1">
    <citation type="journal article" date="2007" name="J. Bacteriol.">
        <title>Complete genome sequence of Haemophilus somnus (Histophilus somni) strain 129Pt and comparison to Haemophilus ducreyi 35000HP and Haemophilus influenzae Rd.</title>
        <authorList>
            <person name="Challacombe J.F."/>
            <person name="Duncan A.J."/>
            <person name="Brettin T.S."/>
            <person name="Bruce D."/>
            <person name="Chertkov O."/>
            <person name="Detter J.C."/>
            <person name="Han C.S."/>
            <person name="Misra M."/>
            <person name="Richardson P."/>
            <person name="Tapia R."/>
            <person name="Thayer N."/>
            <person name="Xie G."/>
            <person name="Inzana T.J."/>
        </authorList>
    </citation>
    <scope>NUCLEOTIDE SEQUENCE [LARGE SCALE GENOMIC DNA]</scope>
    <source>
        <strain>129Pt</strain>
    </source>
</reference>
<evidence type="ECO:0000255" key="1">
    <source>
        <dbReference type="HAMAP-Rule" id="MF_00157"/>
    </source>
</evidence>
<organism>
    <name type="scientific">Histophilus somni (strain 129Pt)</name>
    <name type="common">Haemophilus somnus</name>
    <dbReference type="NCBI Taxonomy" id="205914"/>
    <lineage>
        <taxon>Bacteria</taxon>
        <taxon>Pseudomonadati</taxon>
        <taxon>Pseudomonadota</taxon>
        <taxon>Gammaproteobacteria</taxon>
        <taxon>Pasteurellales</taxon>
        <taxon>Pasteurellaceae</taxon>
        <taxon>Histophilus</taxon>
    </lineage>
</organism>
<comment type="function">
    <text evidence="1">Trims short 3' overhangs of a variety of RNA species, leaving a one or two nucleotide 3' overhang. Responsible for the end-turnover of tRNA: specifically removes the terminal AMP residue from uncharged tRNA (tRNA-C-C-A). Also appears to be involved in tRNA biosynthesis.</text>
</comment>
<comment type="cofactor">
    <cofactor evidence="1">
        <name>Mg(2+)</name>
        <dbReference type="ChEBI" id="CHEBI:18420"/>
    </cofactor>
    <text evidence="1">Binds two Mg(2+) per subunit. The active form of the enzyme binds two Mg(2+) ions in its active site. The first Mg(2+) forms only one salt bridge with the protein.</text>
</comment>
<comment type="subunit">
    <text evidence="1">Homodimer.</text>
</comment>
<comment type="similarity">
    <text evidence="1">Belongs to the RNase T family.</text>
</comment>
<name>RNT_HISS1</name>
<sequence length="218" mass="24200">MTALSEQAVDYNLLKNRFRGFFPVIIDVETAGFNAQTDALLELAAITLKMDENGLLVPDEKCHFHIQPFEGANINPESLKFNGIDIDNPLRGAISENVAMSELFKMVRHGQKKADCQRSVIVAHNATFDQSFVMAAAERTKIKRNPFHPFSIFDTATLSGFMFGQTVLVKGCQVANISFDGKKAHSALYDAERTAELFCYMVNHLKKLGGFPHVAINS</sequence>
<accession>Q0I251</accession>
<keyword id="KW-0269">Exonuclease</keyword>
<keyword id="KW-0378">Hydrolase</keyword>
<keyword id="KW-0460">Magnesium</keyword>
<keyword id="KW-0479">Metal-binding</keyword>
<keyword id="KW-0540">Nuclease</keyword>
<keyword id="KW-0819">tRNA processing</keyword>
<proteinExistence type="inferred from homology"/>
<protein>
    <recommendedName>
        <fullName evidence="1">Ribonuclease T</fullName>
        <ecNumber evidence="1">3.1.13.-</ecNumber>
    </recommendedName>
    <alternativeName>
        <fullName evidence="1">Exoribonuclease T</fullName>
        <shortName evidence="1">RNase T</shortName>
    </alternativeName>
</protein>
<feature type="chain" id="PRO_1000011398" description="Ribonuclease T">
    <location>
        <begin position="1"/>
        <end position="218"/>
    </location>
</feature>
<feature type="domain" description="Exonuclease" evidence="1">
    <location>
        <begin position="24"/>
        <end position="198"/>
    </location>
</feature>
<feature type="active site" description="Proton donor/acceptor" evidence="1">
    <location>
        <position position="185"/>
    </location>
</feature>
<feature type="binding site" evidence="1">
    <location>
        <position position="27"/>
    </location>
    <ligand>
        <name>Mg(2+)</name>
        <dbReference type="ChEBI" id="CHEBI:18420"/>
        <label>1</label>
        <note>catalytic</note>
    </ligand>
</feature>
<feature type="binding site" evidence="1">
    <location>
        <position position="27"/>
    </location>
    <ligand>
        <name>Mg(2+)</name>
        <dbReference type="ChEBI" id="CHEBI:18420"/>
        <label>2</label>
        <note>catalytic</note>
    </ligand>
</feature>
<feature type="binding site" evidence="1">
    <location>
        <position position="29"/>
    </location>
    <ligand>
        <name>Mg(2+)</name>
        <dbReference type="ChEBI" id="CHEBI:18420"/>
        <label>2</label>
        <note>catalytic</note>
    </ligand>
</feature>
<feature type="binding site" evidence="1">
    <location>
        <position position="185"/>
    </location>
    <ligand>
        <name>Mg(2+)</name>
        <dbReference type="ChEBI" id="CHEBI:18420"/>
        <label>2</label>
        <note>catalytic</note>
    </ligand>
</feature>
<feature type="binding site" evidence="1">
    <location>
        <position position="190"/>
    </location>
    <ligand>
        <name>Mg(2+)</name>
        <dbReference type="ChEBI" id="CHEBI:18420"/>
        <label>2</label>
        <note>catalytic</note>
    </ligand>
</feature>
<feature type="site" description="Important for substrate binding and specificity" evidence="1">
    <location>
        <position position="33"/>
    </location>
</feature>
<feature type="site" description="Important for substrate binding and specificity" evidence="1">
    <location>
        <position position="81"/>
    </location>
</feature>
<feature type="site" description="Important for substrate binding and specificity" evidence="1">
    <location>
        <position position="128"/>
    </location>
</feature>
<feature type="site" description="Important for substrate binding and specificity" evidence="1">
    <location>
        <position position="150"/>
    </location>
</feature>